<gene>
    <name evidence="11" type="primary">csdA</name>
</gene>
<feature type="chain" id="PRO_0000403687" description="4-hydroxyphenylacetate decarboxylase activating enzyme">
    <location>
        <begin position="1"/>
        <end position="312"/>
    </location>
</feature>
<feature type="domain" description="Radical SAM core" evidence="6">
    <location>
        <begin position="16"/>
        <end position="299"/>
    </location>
</feature>
<feature type="domain" description="4Fe-4S ferredoxin-type 1" evidence="5">
    <location>
        <begin position="47"/>
        <end position="79"/>
    </location>
</feature>
<feature type="domain" description="4Fe-4S ferredoxin-type 2" evidence="5">
    <location>
        <begin position="80"/>
        <end position="112"/>
    </location>
</feature>
<feature type="binding site" evidence="1">
    <location>
        <position position="30"/>
    </location>
    <ligand>
        <name>[4Fe-4S] cluster</name>
        <dbReference type="ChEBI" id="CHEBI:49883"/>
        <label>1</label>
        <note>4Fe-4S-S-AdoMet</note>
    </ligand>
</feature>
<feature type="binding site" evidence="1">
    <location>
        <position position="34"/>
    </location>
    <ligand>
        <name>[4Fe-4S] cluster</name>
        <dbReference type="ChEBI" id="CHEBI:49883"/>
        <label>1</label>
        <note>4Fe-4S-S-AdoMet</note>
    </ligand>
</feature>
<feature type="binding site" evidence="1">
    <location>
        <begin position="36"/>
        <end position="38"/>
    </location>
    <ligand>
        <name>S-adenosyl-L-methionine</name>
        <dbReference type="ChEBI" id="CHEBI:59789"/>
    </ligand>
</feature>
<feature type="binding site" evidence="1">
    <location>
        <position position="37"/>
    </location>
    <ligand>
        <name>[4Fe-4S] cluster</name>
        <dbReference type="ChEBI" id="CHEBI:49883"/>
        <label>1</label>
        <note>4Fe-4S-S-AdoMet</note>
    </ligand>
</feature>
<feature type="binding site" evidence="2">
    <location>
        <position position="56"/>
    </location>
    <ligand>
        <name>[4Fe-4S] cluster</name>
        <dbReference type="ChEBI" id="CHEBI:49883"/>
        <label>2</label>
    </ligand>
</feature>
<feature type="binding site" evidence="2">
    <location>
        <position position="62"/>
    </location>
    <ligand>
        <name>[4Fe-4S] cluster</name>
        <dbReference type="ChEBI" id="CHEBI:49883"/>
        <label>2</label>
    </ligand>
</feature>
<feature type="binding site" evidence="2">
    <location>
        <position position="65"/>
    </location>
    <ligand>
        <name>[4Fe-4S] cluster</name>
        <dbReference type="ChEBI" id="CHEBI:49883"/>
        <label>2</label>
    </ligand>
</feature>
<feature type="binding site" evidence="2">
    <location>
        <position position="101"/>
    </location>
    <ligand>
        <name>[4Fe-4S] cluster</name>
        <dbReference type="ChEBI" id="CHEBI:49883"/>
        <label>2</label>
    </ligand>
</feature>
<feature type="binding site" evidence="1">
    <location>
        <position position="140"/>
    </location>
    <ligand>
        <name>S-adenosyl-L-methionine</name>
        <dbReference type="ChEBI" id="CHEBI:59789"/>
    </ligand>
</feature>
<feature type="binding site" evidence="1">
    <location>
        <begin position="189"/>
        <end position="191"/>
    </location>
    <ligand>
        <name>S-adenosyl-L-methionine</name>
        <dbReference type="ChEBI" id="CHEBI:59789"/>
    </ligand>
</feature>
<feature type="binding site" evidence="1">
    <location>
        <position position="263"/>
    </location>
    <ligand>
        <name>S-adenosyl-L-methionine</name>
        <dbReference type="ChEBI" id="CHEBI:59789"/>
    </ligand>
</feature>
<proteinExistence type="evidence at protein level"/>
<sequence>MKEKGLIFDIQSFSVHDGPGCRTSVFFIGCPLQCKWCANPESWTKKKHIMVAENVCKWKNGCRSCINACSHDSIKFSEDGKLKISWDTCEKCETFDCVNMCPNNALKQCVKEYTVDELMTILKRDFNNWGSDGGVTFTGGDPLMHHEFLVEVLKKCYDSQIHKAIETSGYAKQEVFLEVLKYIDFAFIDVKNMDREKHKQGTGVYNDLILSNIEALKKSNWNGRLVLRQPTIAGYNDSDENAYKLIEFMNKNSLYEINLLKFHRLGETKWNQLGKEYEYSKYGDMTNEKMEHLQQLYLDNNIACYIGDNTPF</sequence>
<comment type="function">
    <text evidence="3 7">Catalyzes activation of 4-hydroxyphenylacetate decarboxylase under anaerobic conditions by generation of an organic free radical on a glycine residue, via a homolytic cleavage of S-adenosyl-L-methionine (SAM).</text>
</comment>
<comment type="catalytic activity">
    <reaction evidence="10">
        <text>glycyl-[protein] + reduced [flavodoxin] + S-adenosyl-L-methionine = glycin-2-yl radical-[protein] + semiquinone [flavodoxin] + 5'-deoxyadenosine + L-methionine + H(+)</text>
        <dbReference type="Rhea" id="RHEA:61976"/>
        <dbReference type="Rhea" id="RHEA-COMP:10622"/>
        <dbReference type="Rhea" id="RHEA-COMP:14480"/>
        <dbReference type="Rhea" id="RHEA-COMP:15993"/>
        <dbReference type="Rhea" id="RHEA-COMP:15994"/>
        <dbReference type="ChEBI" id="CHEBI:15378"/>
        <dbReference type="ChEBI" id="CHEBI:17319"/>
        <dbReference type="ChEBI" id="CHEBI:29947"/>
        <dbReference type="ChEBI" id="CHEBI:32722"/>
        <dbReference type="ChEBI" id="CHEBI:57618"/>
        <dbReference type="ChEBI" id="CHEBI:57844"/>
        <dbReference type="ChEBI" id="CHEBI:59789"/>
        <dbReference type="ChEBI" id="CHEBI:140311"/>
    </reaction>
</comment>
<comment type="cofactor">
    <cofactor evidence="7">
        <name>[4Fe-4S] cluster</name>
        <dbReference type="ChEBI" id="CHEBI:49883"/>
    </cofactor>
    <text evidence="7 9">Binds 2 [4Fe-4S] clusters (PubMed:16878993). One cluster is coordinated with 3 cysteines and an exchangeable S-adenosyl-L-methionine (Probable).</text>
</comment>
<comment type="subunit">
    <text evidence="7">Monomer.</text>
</comment>
<comment type="similarity">
    <text evidence="4">Belongs to the organic radical-activating enzymes family.</text>
</comment>
<keyword id="KW-0004">4Fe-4S</keyword>
<keyword id="KW-0408">Iron</keyword>
<keyword id="KW-0411">Iron-sulfur</keyword>
<keyword id="KW-0479">Metal-binding</keyword>
<keyword id="KW-0560">Oxidoreductase</keyword>
<keyword id="KW-0677">Repeat</keyword>
<keyword id="KW-0949">S-adenosyl-L-methionine</keyword>
<evidence type="ECO:0000250" key="1">
    <source>
        <dbReference type="UniProtKB" id="P0A9N4"/>
    </source>
</evidence>
<evidence type="ECO:0000250" key="2">
    <source>
        <dbReference type="UniProtKB" id="Q30W71"/>
    </source>
</evidence>
<evidence type="ECO:0000250" key="3">
    <source>
        <dbReference type="UniProtKB" id="Q46267"/>
    </source>
</evidence>
<evidence type="ECO:0000255" key="4"/>
<evidence type="ECO:0000255" key="5">
    <source>
        <dbReference type="PROSITE-ProRule" id="PRU00711"/>
    </source>
</evidence>
<evidence type="ECO:0000255" key="6">
    <source>
        <dbReference type="PROSITE-ProRule" id="PRU01266"/>
    </source>
</evidence>
<evidence type="ECO:0000269" key="7">
    <source>
    </source>
</evidence>
<evidence type="ECO:0000303" key="8">
    <source>
    </source>
</evidence>
<evidence type="ECO:0000305" key="9"/>
<evidence type="ECO:0000305" key="10">
    <source>
    </source>
</evidence>
<evidence type="ECO:0000312" key="11">
    <source>
        <dbReference type="EMBL" id="ABB05048.1"/>
    </source>
</evidence>
<reference key="1">
    <citation type="journal article" date="2006" name="Biochemistry">
        <title>4-Hydroxyphenylacetate decarboxylases: properties of a novel subclass of glycyl radical enzyme systems.</title>
        <authorList>
            <person name="Yu L."/>
            <person name="Blaser M."/>
            <person name="Andrei P.I."/>
            <person name="Pierik A.J."/>
            <person name="Selmer T."/>
        </authorList>
    </citation>
    <scope>NUCLEOTIDE SEQUENCE [GENOMIC DNA]</scope>
    <scope>FUNCTION</scope>
    <scope>COFACTOR</scope>
    <scope>SUBUNIT</scope>
    <source>
        <strain evidence="11">ATCC 25775 / DSM 757 / JCM 1414 / NCIB 8855 / VPI 5393</strain>
    </source>
</reference>
<protein>
    <recommendedName>
        <fullName evidence="11">4-hydroxyphenylacetate decarboxylase activating enzyme</fullName>
        <ecNumber evidence="10">1.97.1.-</ecNumber>
    </recommendedName>
    <alternativeName>
        <fullName evidence="8">Csd-AE</fullName>
    </alternativeName>
</protein>
<accession>Q38HX2</accession>
<organism>
    <name type="scientific">Clostridium scatologenes</name>
    <dbReference type="NCBI Taxonomy" id="1548"/>
    <lineage>
        <taxon>Bacteria</taxon>
        <taxon>Bacillati</taxon>
        <taxon>Bacillota</taxon>
        <taxon>Clostridia</taxon>
        <taxon>Eubacteriales</taxon>
        <taxon>Clostridiaceae</taxon>
        <taxon>Clostridium</taxon>
    </lineage>
</organism>
<name>HPDA_CLOSL</name>
<dbReference type="EC" id="1.97.1.-" evidence="10"/>
<dbReference type="EMBL" id="DQ227741">
    <property type="protein sequence ID" value="ABB05048.1"/>
    <property type="molecule type" value="Genomic_DNA"/>
</dbReference>
<dbReference type="RefSeq" id="WP_029163541.1">
    <property type="nucleotide sequence ID" value="NZ_CP009933.1"/>
</dbReference>
<dbReference type="SMR" id="Q38HX2"/>
<dbReference type="STRING" id="1548.CSCA_5037"/>
<dbReference type="GO" id="GO:0051539">
    <property type="term" value="F:4 iron, 4 sulfur cluster binding"/>
    <property type="evidence" value="ECO:0007669"/>
    <property type="project" value="UniProtKB-KW"/>
</dbReference>
<dbReference type="GO" id="GO:0046872">
    <property type="term" value="F:metal ion binding"/>
    <property type="evidence" value="ECO:0007669"/>
    <property type="project" value="UniProtKB-KW"/>
</dbReference>
<dbReference type="GO" id="GO:0016491">
    <property type="term" value="F:oxidoreductase activity"/>
    <property type="evidence" value="ECO:0007669"/>
    <property type="project" value="UniProtKB-KW"/>
</dbReference>
<dbReference type="CDD" id="cd01335">
    <property type="entry name" value="Radical_SAM"/>
    <property type="match status" value="1"/>
</dbReference>
<dbReference type="Gene3D" id="3.30.70.20">
    <property type="match status" value="1"/>
</dbReference>
<dbReference type="Gene3D" id="3.20.20.70">
    <property type="entry name" value="Aldolase class I"/>
    <property type="match status" value="1"/>
</dbReference>
<dbReference type="InterPro" id="IPR017896">
    <property type="entry name" value="4Fe4S_Fe-S-bd"/>
</dbReference>
<dbReference type="InterPro" id="IPR013785">
    <property type="entry name" value="Aldolase_TIM"/>
</dbReference>
<dbReference type="InterPro" id="IPR040074">
    <property type="entry name" value="BssD/PflA/YjjW"/>
</dbReference>
<dbReference type="InterPro" id="IPR034457">
    <property type="entry name" value="Organic_radical-activating"/>
</dbReference>
<dbReference type="InterPro" id="IPR012839">
    <property type="entry name" value="Organic_radical_activase"/>
</dbReference>
<dbReference type="InterPro" id="IPR001989">
    <property type="entry name" value="Radical_activat_CS"/>
</dbReference>
<dbReference type="InterPro" id="IPR007197">
    <property type="entry name" value="rSAM"/>
</dbReference>
<dbReference type="NCBIfam" id="NF033717">
    <property type="entry name" value="HPDL_rSAM_activ"/>
    <property type="match status" value="1"/>
</dbReference>
<dbReference type="NCBIfam" id="TIGR02494">
    <property type="entry name" value="PFLE_PFLC"/>
    <property type="match status" value="1"/>
</dbReference>
<dbReference type="PANTHER" id="PTHR30352:SF4">
    <property type="entry name" value="PYRUVATE FORMATE-LYASE 2-ACTIVATING ENZYME"/>
    <property type="match status" value="1"/>
</dbReference>
<dbReference type="PANTHER" id="PTHR30352">
    <property type="entry name" value="PYRUVATE FORMATE-LYASE-ACTIVATING ENZYME"/>
    <property type="match status" value="1"/>
</dbReference>
<dbReference type="Pfam" id="PF13353">
    <property type="entry name" value="Fer4_12"/>
    <property type="match status" value="2"/>
</dbReference>
<dbReference type="Pfam" id="PF04055">
    <property type="entry name" value="Radical_SAM"/>
    <property type="match status" value="1"/>
</dbReference>
<dbReference type="PIRSF" id="PIRSF000371">
    <property type="entry name" value="PFL_act_enz"/>
    <property type="match status" value="1"/>
</dbReference>
<dbReference type="SFLD" id="SFLDG01118">
    <property type="entry name" value="activating_enzymes__group_2"/>
    <property type="match status" value="1"/>
</dbReference>
<dbReference type="SFLD" id="SFLDG01066">
    <property type="entry name" value="organic_radical-activating_enz"/>
    <property type="match status" value="1"/>
</dbReference>
<dbReference type="SUPFAM" id="SSF54862">
    <property type="entry name" value="4Fe-4S ferredoxins"/>
    <property type="match status" value="1"/>
</dbReference>
<dbReference type="SUPFAM" id="SSF102114">
    <property type="entry name" value="Radical SAM enzymes"/>
    <property type="match status" value="1"/>
</dbReference>
<dbReference type="PROSITE" id="PS51379">
    <property type="entry name" value="4FE4S_FER_2"/>
    <property type="match status" value="2"/>
</dbReference>
<dbReference type="PROSITE" id="PS01087">
    <property type="entry name" value="RADICAL_ACTIVATING"/>
    <property type="match status" value="1"/>
</dbReference>
<dbReference type="PROSITE" id="PS51918">
    <property type="entry name" value="RADICAL_SAM"/>
    <property type="match status" value="1"/>
</dbReference>